<proteinExistence type="uncertain"/>
<evidence type="ECO:0000255" key="1"/>
<evidence type="ECO:0000305" key="2"/>
<feature type="chain" id="PRO_0000263729" description="Putative uncharacterized protein encoded by LINC00596">
    <location>
        <begin position="1"/>
        <end position="117"/>
    </location>
</feature>
<feature type="transmembrane region" description="Helical" evidence="1">
    <location>
        <begin position="38"/>
        <end position="58"/>
    </location>
</feature>
<organism>
    <name type="scientific">Homo sapiens</name>
    <name type="common">Human</name>
    <dbReference type="NCBI Taxonomy" id="9606"/>
    <lineage>
        <taxon>Eukaryota</taxon>
        <taxon>Metazoa</taxon>
        <taxon>Chordata</taxon>
        <taxon>Craniata</taxon>
        <taxon>Vertebrata</taxon>
        <taxon>Euteleostomi</taxon>
        <taxon>Mammalia</taxon>
        <taxon>Eutheria</taxon>
        <taxon>Euarchontoglires</taxon>
        <taxon>Primates</taxon>
        <taxon>Haplorrhini</taxon>
        <taxon>Catarrhini</taxon>
        <taxon>Hominidae</taxon>
        <taxon>Homo</taxon>
    </lineage>
</organism>
<reference key="1">
    <citation type="submission" date="2003-01" db="EMBL/GenBank/DDBJ databases">
        <title>Full-length cDNA libraries and normalization.</title>
        <authorList>
            <person name="Li W.B."/>
            <person name="Gruber C."/>
            <person name="Jessee J."/>
            <person name="Polayes D."/>
        </authorList>
    </citation>
    <scope>NUCLEOTIDE SEQUENCE [LARGE SCALE MRNA]</scope>
    <source>
        <tissue>Placenta</tissue>
    </source>
</reference>
<reference key="2">
    <citation type="journal article" date="2003" name="Nature">
        <title>The DNA sequence and analysis of human chromosome 14.</title>
        <authorList>
            <person name="Heilig R."/>
            <person name="Eckenberg R."/>
            <person name="Petit J.-L."/>
            <person name="Fonknechten N."/>
            <person name="Da Silva C."/>
            <person name="Cattolico L."/>
            <person name="Levy M."/>
            <person name="Barbe V."/>
            <person name="De Berardinis V."/>
            <person name="Ureta-Vidal A."/>
            <person name="Pelletier E."/>
            <person name="Vico V."/>
            <person name="Anthouard V."/>
            <person name="Rowen L."/>
            <person name="Madan A."/>
            <person name="Qin S."/>
            <person name="Sun H."/>
            <person name="Du H."/>
            <person name="Pepin K."/>
            <person name="Artiguenave F."/>
            <person name="Robert C."/>
            <person name="Cruaud C."/>
            <person name="Bruels T."/>
            <person name="Jaillon O."/>
            <person name="Friedlander L."/>
            <person name="Samson G."/>
            <person name="Brottier P."/>
            <person name="Cure S."/>
            <person name="Segurens B."/>
            <person name="Aniere F."/>
            <person name="Samain S."/>
            <person name="Crespeau H."/>
            <person name="Abbasi N."/>
            <person name="Aiach N."/>
            <person name="Boscus D."/>
            <person name="Dickhoff R."/>
            <person name="Dors M."/>
            <person name="Dubois I."/>
            <person name="Friedman C."/>
            <person name="Gouyvenoux M."/>
            <person name="James R."/>
            <person name="Madan A."/>
            <person name="Mairey-Estrada B."/>
            <person name="Mangenot S."/>
            <person name="Martins N."/>
            <person name="Menard M."/>
            <person name="Oztas S."/>
            <person name="Ratcliffe A."/>
            <person name="Shaffer T."/>
            <person name="Trask B."/>
            <person name="Vacherie B."/>
            <person name="Bellemere C."/>
            <person name="Belser C."/>
            <person name="Besnard-Gonnet M."/>
            <person name="Bartol-Mavel D."/>
            <person name="Boutard M."/>
            <person name="Briez-Silla S."/>
            <person name="Combette S."/>
            <person name="Dufosse-Laurent V."/>
            <person name="Ferron C."/>
            <person name="Lechaplais C."/>
            <person name="Louesse C."/>
            <person name="Muselet D."/>
            <person name="Magdelenat G."/>
            <person name="Pateau E."/>
            <person name="Petit E."/>
            <person name="Sirvain-Trukniewicz P."/>
            <person name="Trybou A."/>
            <person name="Vega-Czarny N."/>
            <person name="Bataille E."/>
            <person name="Bluet E."/>
            <person name="Bordelais I."/>
            <person name="Dubois M."/>
            <person name="Dumont C."/>
            <person name="Guerin T."/>
            <person name="Haffray S."/>
            <person name="Hammadi R."/>
            <person name="Muanga J."/>
            <person name="Pellouin V."/>
            <person name="Robert D."/>
            <person name="Wunderle E."/>
            <person name="Gauguet G."/>
            <person name="Roy A."/>
            <person name="Sainte-Marthe L."/>
            <person name="Verdier J."/>
            <person name="Verdier-Discala C."/>
            <person name="Hillier L.W."/>
            <person name="Fulton L."/>
            <person name="McPherson J."/>
            <person name="Matsuda F."/>
            <person name="Wilson R."/>
            <person name="Scarpelli C."/>
            <person name="Gyapay G."/>
            <person name="Wincker P."/>
            <person name="Saurin W."/>
            <person name="Quetier F."/>
            <person name="Waterston R."/>
            <person name="Hood L."/>
            <person name="Weissenbach J."/>
        </authorList>
    </citation>
    <scope>NUCLEOTIDE SEQUENCE [LARGE SCALE GENOMIC DNA]</scope>
</reference>
<sequence>MFTLLLSNYYSRLEGWMMDNNFSHHWKGMFPTETESTVFCLFVYLFIFVFETASGFVAQTGVHWCNLGSLQPLPPGFKRFSCLSLPSSLDYRHAPPCLANFYIFSGDRVSPCWPDWS</sequence>
<name>CN165_HUMAN</name>
<keyword id="KW-0472">Membrane</keyword>
<keyword id="KW-1185">Reference proteome</keyword>
<keyword id="KW-0812">Transmembrane</keyword>
<keyword id="KW-1133">Transmembrane helix</keyword>
<gene>
    <name type="primary">LINC00596</name>
    <name type="synonym">C14orf165</name>
</gene>
<protein>
    <recommendedName>
        <fullName>Putative uncharacterized protein encoded by LINC00596</fullName>
    </recommendedName>
</protein>
<dbReference type="EMBL" id="BX161431">
    <property type="protein sequence ID" value="CAD61903.1"/>
    <property type="molecule type" value="mRNA"/>
</dbReference>
<dbReference type="EMBL" id="AL136419">
    <property type="status" value="NOT_ANNOTATED_CDS"/>
    <property type="molecule type" value="Genomic_DNA"/>
</dbReference>
<dbReference type="BioMuta" id="HGNC:23167"/>
<dbReference type="DMDM" id="74750399"/>
<dbReference type="PeptideAtlas" id="Q86U02"/>
<dbReference type="AGR" id="HGNC:23167"/>
<dbReference type="GeneCards" id="LINC00596"/>
<dbReference type="HGNC" id="HGNC:23167">
    <property type="gene designation" value="LINC00596"/>
</dbReference>
<dbReference type="neXtProt" id="NX_Q86U02"/>
<dbReference type="InParanoid" id="Q86U02"/>
<dbReference type="PAN-GO" id="Q86U02">
    <property type="GO annotations" value="0 GO annotations based on evolutionary models"/>
</dbReference>
<dbReference type="PhylomeDB" id="Q86U02"/>
<dbReference type="ChiTaRS" id="LINC00596">
    <property type="organism name" value="human"/>
</dbReference>
<dbReference type="Pharos" id="Q86U02">
    <property type="development level" value="Tdark"/>
</dbReference>
<dbReference type="Proteomes" id="UP000005640">
    <property type="component" value="Unplaced"/>
</dbReference>
<dbReference type="RNAct" id="Q86U02">
    <property type="molecule type" value="protein"/>
</dbReference>
<dbReference type="GO" id="GO:0016020">
    <property type="term" value="C:membrane"/>
    <property type="evidence" value="ECO:0007669"/>
    <property type="project" value="UniProtKB-SubCell"/>
</dbReference>
<dbReference type="PANTHER" id="PTHR46254:SF6">
    <property type="entry name" value="HIGH MOBILITY GROUP AT-HOOK 2"/>
    <property type="match status" value="1"/>
</dbReference>
<dbReference type="PANTHER" id="PTHR46254">
    <property type="entry name" value="PROTEIN GVQW1-RELATED"/>
    <property type="match status" value="1"/>
</dbReference>
<comment type="subcellular location">
    <subcellularLocation>
        <location evidence="2">Membrane</location>
        <topology evidence="2">Single-pass membrane protein</topology>
    </subcellularLocation>
</comment>
<comment type="caution">
    <text evidence="2">Product of a dubious CDS prediction. Probable non-coding RNA.</text>
</comment>
<accession>Q86U02</accession>